<evidence type="ECO:0000255" key="1">
    <source>
        <dbReference type="HAMAP-Rule" id="MF_00113"/>
    </source>
</evidence>
<gene>
    <name evidence="1" type="primary">queA</name>
    <name type="ordered locus">CHU_3055</name>
</gene>
<keyword id="KW-0963">Cytoplasm</keyword>
<keyword id="KW-0671">Queuosine biosynthesis</keyword>
<keyword id="KW-1185">Reference proteome</keyword>
<keyword id="KW-0949">S-adenosyl-L-methionine</keyword>
<keyword id="KW-0808">Transferase</keyword>
<sequence>MKLSEFKFALPAELVAQHPAANRDEAKMMVINRATGTIEHKIFKDIINYFDEGDIMVMNNTKVFPARLYGNKEKTGAKIEVFLLRELNAELHLWDVLVDPARKIRVGNKLYFGESDLVAEVVDNTTSRGRTIRFLFDGNSEDFSKIIETIGETPLPRYIKRPIEEADKDRYQTIFAENKGAVAAPTAGLHFTKQVMKRMEIKGVNFAPLTLHVGLGSFRTVDVEDLTKHKMDSENFIIESTTADVVNKALDNKKRVCAIGTTSMRALESSVSANNRLKQNAGWTDRFIFPPYDFKIANCMLTNFHMPESTLYMMACAFGGYELMTKAYKTAIKEKYNFLSYGDVMLII</sequence>
<comment type="function">
    <text evidence="1">Transfers and isomerizes the ribose moiety from AdoMet to the 7-aminomethyl group of 7-deazaguanine (preQ1-tRNA) to give epoxyqueuosine (oQ-tRNA).</text>
</comment>
<comment type="catalytic activity">
    <reaction evidence="1">
        <text>7-aminomethyl-7-carbaguanosine(34) in tRNA + S-adenosyl-L-methionine = epoxyqueuosine(34) in tRNA + adenine + L-methionine + 2 H(+)</text>
        <dbReference type="Rhea" id="RHEA:32155"/>
        <dbReference type="Rhea" id="RHEA-COMP:10342"/>
        <dbReference type="Rhea" id="RHEA-COMP:18582"/>
        <dbReference type="ChEBI" id="CHEBI:15378"/>
        <dbReference type="ChEBI" id="CHEBI:16708"/>
        <dbReference type="ChEBI" id="CHEBI:57844"/>
        <dbReference type="ChEBI" id="CHEBI:59789"/>
        <dbReference type="ChEBI" id="CHEBI:82833"/>
        <dbReference type="ChEBI" id="CHEBI:194443"/>
        <dbReference type="EC" id="2.4.99.17"/>
    </reaction>
</comment>
<comment type="pathway">
    <text evidence="1">tRNA modification; tRNA-queuosine biosynthesis.</text>
</comment>
<comment type="subunit">
    <text evidence="1">Monomer.</text>
</comment>
<comment type="subcellular location">
    <subcellularLocation>
        <location evidence="1">Cytoplasm</location>
    </subcellularLocation>
</comment>
<comment type="similarity">
    <text evidence="1">Belongs to the QueA family.</text>
</comment>
<dbReference type="EC" id="2.4.99.17" evidence="1"/>
<dbReference type="EMBL" id="CP000383">
    <property type="protein sequence ID" value="ABG60296.1"/>
    <property type="molecule type" value="Genomic_DNA"/>
</dbReference>
<dbReference type="RefSeq" id="WP_011586406.1">
    <property type="nucleotide sequence ID" value="NC_008255.1"/>
</dbReference>
<dbReference type="SMR" id="Q11QL8"/>
<dbReference type="STRING" id="269798.CHU_3055"/>
<dbReference type="KEGG" id="chu:CHU_3055"/>
<dbReference type="eggNOG" id="COG0809">
    <property type="taxonomic scope" value="Bacteria"/>
</dbReference>
<dbReference type="HOGENOM" id="CLU_039110_1_0_10"/>
<dbReference type="OrthoDB" id="9805933at2"/>
<dbReference type="UniPathway" id="UPA00392"/>
<dbReference type="Proteomes" id="UP000001822">
    <property type="component" value="Chromosome"/>
</dbReference>
<dbReference type="GO" id="GO:0005737">
    <property type="term" value="C:cytoplasm"/>
    <property type="evidence" value="ECO:0007669"/>
    <property type="project" value="UniProtKB-SubCell"/>
</dbReference>
<dbReference type="GO" id="GO:0051075">
    <property type="term" value="F:S-adenosylmethionine:tRNA ribosyltransferase-isomerase activity"/>
    <property type="evidence" value="ECO:0007669"/>
    <property type="project" value="UniProtKB-EC"/>
</dbReference>
<dbReference type="GO" id="GO:0008616">
    <property type="term" value="P:queuosine biosynthetic process"/>
    <property type="evidence" value="ECO:0007669"/>
    <property type="project" value="UniProtKB-UniRule"/>
</dbReference>
<dbReference type="GO" id="GO:0002099">
    <property type="term" value="P:tRNA wobble guanine modification"/>
    <property type="evidence" value="ECO:0007669"/>
    <property type="project" value="TreeGrafter"/>
</dbReference>
<dbReference type="FunFam" id="2.40.10.240:FF:000002">
    <property type="entry name" value="S-adenosylmethionine:tRNA ribosyltransferase-isomerase"/>
    <property type="match status" value="1"/>
</dbReference>
<dbReference type="Gene3D" id="2.40.10.240">
    <property type="entry name" value="QueA-like"/>
    <property type="match status" value="1"/>
</dbReference>
<dbReference type="Gene3D" id="3.40.1780.10">
    <property type="entry name" value="QueA-like"/>
    <property type="match status" value="1"/>
</dbReference>
<dbReference type="HAMAP" id="MF_00113">
    <property type="entry name" value="QueA"/>
    <property type="match status" value="1"/>
</dbReference>
<dbReference type="InterPro" id="IPR003699">
    <property type="entry name" value="QueA"/>
</dbReference>
<dbReference type="InterPro" id="IPR042118">
    <property type="entry name" value="QueA_dom1"/>
</dbReference>
<dbReference type="InterPro" id="IPR042119">
    <property type="entry name" value="QueA_dom2"/>
</dbReference>
<dbReference type="InterPro" id="IPR036100">
    <property type="entry name" value="QueA_sf"/>
</dbReference>
<dbReference type="NCBIfam" id="NF001140">
    <property type="entry name" value="PRK00147.1"/>
    <property type="match status" value="1"/>
</dbReference>
<dbReference type="NCBIfam" id="TIGR00113">
    <property type="entry name" value="queA"/>
    <property type="match status" value="1"/>
</dbReference>
<dbReference type="PANTHER" id="PTHR30307">
    <property type="entry name" value="S-ADENOSYLMETHIONINE:TRNA RIBOSYLTRANSFERASE-ISOMERASE"/>
    <property type="match status" value="1"/>
</dbReference>
<dbReference type="PANTHER" id="PTHR30307:SF0">
    <property type="entry name" value="S-ADENOSYLMETHIONINE:TRNA RIBOSYLTRANSFERASE-ISOMERASE"/>
    <property type="match status" value="1"/>
</dbReference>
<dbReference type="Pfam" id="PF02547">
    <property type="entry name" value="Queuosine_synth"/>
    <property type="match status" value="1"/>
</dbReference>
<dbReference type="SUPFAM" id="SSF111337">
    <property type="entry name" value="QueA-like"/>
    <property type="match status" value="1"/>
</dbReference>
<reference key="1">
    <citation type="journal article" date="2007" name="Appl. Environ. Microbiol.">
        <title>Genome sequence of the cellulolytic gliding bacterium Cytophaga hutchinsonii.</title>
        <authorList>
            <person name="Xie G."/>
            <person name="Bruce D.C."/>
            <person name="Challacombe J.F."/>
            <person name="Chertkov O."/>
            <person name="Detter J.C."/>
            <person name="Gilna P."/>
            <person name="Han C.S."/>
            <person name="Lucas S."/>
            <person name="Misra M."/>
            <person name="Myers G.L."/>
            <person name="Richardson P."/>
            <person name="Tapia R."/>
            <person name="Thayer N."/>
            <person name="Thompson L.S."/>
            <person name="Brettin T.S."/>
            <person name="Henrissat B."/>
            <person name="Wilson D.B."/>
            <person name="McBride M.J."/>
        </authorList>
    </citation>
    <scope>NUCLEOTIDE SEQUENCE [LARGE SCALE GENOMIC DNA]</scope>
    <source>
        <strain>ATCC 33406 / DSM 1761 / JCM 20678 / CIP 103989 / IAM 12607 / NBRC 15051 / NCIMB 9469 / D465</strain>
    </source>
</reference>
<organism>
    <name type="scientific">Cytophaga hutchinsonii (strain ATCC 33406 / DSM 1761 / CIP 103989 / NBRC 15051 / NCIMB 9469 / D465)</name>
    <dbReference type="NCBI Taxonomy" id="269798"/>
    <lineage>
        <taxon>Bacteria</taxon>
        <taxon>Pseudomonadati</taxon>
        <taxon>Bacteroidota</taxon>
        <taxon>Cytophagia</taxon>
        <taxon>Cytophagales</taxon>
        <taxon>Cytophagaceae</taxon>
        <taxon>Cytophaga</taxon>
    </lineage>
</organism>
<feature type="chain" id="PRO_1000015205" description="S-adenosylmethionine:tRNA ribosyltransferase-isomerase">
    <location>
        <begin position="1"/>
        <end position="348"/>
    </location>
</feature>
<name>QUEA_CYTH3</name>
<accession>Q11QL8</accession>
<protein>
    <recommendedName>
        <fullName evidence="1">S-adenosylmethionine:tRNA ribosyltransferase-isomerase</fullName>
        <ecNumber evidence="1">2.4.99.17</ecNumber>
    </recommendedName>
    <alternativeName>
        <fullName evidence="1">Queuosine biosynthesis protein QueA</fullName>
    </alternativeName>
</protein>
<proteinExistence type="inferred from homology"/>